<accession>Q88MP1</accession>
<comment type="function">
    <text evidence="1">Catalyzes the conversion of the cyclic tetrahydrodipicolinate (THDP) into the acyclic N-succinyl-L-2-amino-6-oxopimelate using succinyl-CoA.</text>
</comment>
<comment type="catalytic activity">
    <reaction evidence="1">
        <text>(S)-2,3,4,5-tetrahydrodipicolinate + succinyl-CoA + H2O = (S)-2-succinylamino-6-oxoheptanedioate + CoA</text>
        <dbReference type="Rhea" id="RHEA:17325"/>
        <dbReference type="ChEBI" id="CHEBI:15377"/>
        <dbReference type="ChEBI" id="CHEBI:15685"/>
        <dbReference type="ChEBI" id="CHEBI:16845"/>
        <dbReference type="ChEBI" id="CHEBI:57287"/>
        <dbReference type="ChEBI" id="CHEBI:57292"/>
        <dbReference type="EC" id="2.3.1.117"/>
    </reaction>
</comment>
<comment type="pathway">
    <text evidence="1">Amino-acid biosynthesis; L-lysine biosynthesis via DAP pathway; LL-2,6-diaminopimelate from (S)-tetrahydrodipicolinate (succinylase route): step 1/3.</text>
</comment>
<comment type="subunit">
    <text evidence="1">Homotrimer.</text>
</comment>
<comment type="subcellular location">
    <subcellularLocation>
        <location evidence="1">Cytoplasm</location>
    </subcellularLocation>
</comment>
<comment type="similarity">
    <text evidence="1">Belongs to the type 2 tetrahydrodipicolinate N-succinyltransferase family.</text>
</comment>
<organism>
    <name type="scientific">Pseudomonas putida (strain ATCC 47054 / DSM 6125 / CFBP 8728 / NCIMB 11950 / KT2440)</name>
    <dbReference type="NCBI Taxonomy" id="160488"/>
    <lineage>
        <taxon>Bacteria</taxon>
        <taxon>Pseudomonadati</taxon>
        <taxon>Pseudomonadota</taxon>
        <taxon>Gammaproteobacteria</taxon>
        <taxon>Pseudomonadales</taxon>
        <taxon>Pseudomonadaceae</taxon>
        <taxon>Pseudomonas</taxon>
    </lineage>
</organism>
<name>DAPD_PSEPK</name>
<dbReference type="EC" id="2.3.1.117" evidence="1"/>
<dbReference type="EMBL" id="AE015451">
    <property type="protein sequence ID" value="AAN67151.1"/>
    <property type="molecule type" value="Genomic_DNA"/>
</dbReference>
<dbReference type="RefSeq" id="NP_743687.1">
    <property type="nucleotide sequence ID" value="NC_002947.4"/>
</dbReference>
<dbReference type="RefSeq" id="WP_004574732.1">
    <property type="nucleotide sequence ID" value="NZ_CP169744.1"/>
</dbReference>
<dbReference type="SMR" id="Q88MP1"/>
<dbReference type="STRING" id="160488.PP_1530"/>
<dbReference type="PaxDb" id="160488-PP_1530"/>
<dbReference type="GeneID" id="83681937"/>
<dbReference type="KEGG" id="ppu:PP_1530"/>
<dbReference type="PATRIC" id="fig|160488.4.peg.1619"/>
<dbReference type="eggNOG" id="COG2171">
    <property type="taxonomic scope" value="Bacteria"/>
</dbReference>
<dbReference type="HOGENOM" id="CLU_057490_0_0_6"/>
<dbReference type="OrthoDB" id="9782799at2"/>
<dbReference type="PhylomeDB" id="Q88MP1"/>
<dbReference type="BioCyc" id="PPUT160488:G1G01-1621-MONOMER"/>
<dbReference type="UniPathway" id="UPA00034">
    <property type="reaction ID" value="UER00019"/>
</dbReference>
<dbReference type="Proteomes" id="UP000000556">
    <property type="component" value="Chromosome"/>
</dbReference>
<dbReference type="GO" id="GO:0005737">
    <property type="term" value="C:cytoplasm"/>
    <property type="evidence" value="ECO:0007669"/>
    <property type="project" value="UniProtKB-SubCell"/>
</dbReference>
<dbReference type="GO" id="GO:0008666">
    <property type="term" value="F:2,3,4,5-tetrahydropyridine-2,6-dicarboxylate N-succinyltransferase activity"/>
    <property type="evidence" value="ECO:0007669"/>
    <property type="project" value="UniProtKB-UniRule"/>
</dbReference>
<dbReference type="GO" id="GO:0000287">
    <property type="term" value="F:magnesium ion binding"/>
    <property type="evidence" value="ECO:0007669"/>
    <property type="project" value="UniProtKB-UniRule"/>
</dbReference>
<dbReference type="GO" id="GO:0019877">
    <property type="term" value="P:diaminopimelate biosynthetic process"/>
    <property type="evidence" value="ECO:0007669"/>
    <property type="project" value="UniProtKB-UniRule"/>
</dbReference>
<dbReference type="GO" id="GO:0009089">
    <property type="term" value="P:lysine biosynthetic process via diaminopimelate"/>
    <property type="evidence" value="ECO:0007669"/>
    <property type="project" value="UniProtKB-UniRule"/>
</dbReference>
<dbReference type="CDD" id="cd04649">
    <property type="entry name" value="LbH_THP_succinylT_putative"/>
    <property type="match status" value="1"/>
</dbReference>
<dbReference type="FunFam" id="2.160.10.10:FF:000009">
    <property type="entry name" value="2,3,4,5-tetrahydropyridine-2,6-dicarboxylate N-succinyltransferase"/>
    <property type="match status" value="1"/>
</dbReference>
<dbReference type="FunFam" id="3.30.60.70:FF:000001">
    <property type="entry name" value="2,3,4,5-tetrahydropyridine-2,6-dicarboxylate N-succinyltransferase"/>
    <property type="match status" value="1"/>
</dbReference>
<dbReference type="Gene3D" id="3.30.70.2010">
    <property type="match status" value="1"/>
</dbReference>
<dbReference type="Gene3D" id="2.160.10.10">
    <property type="entry name" value="Hexapeptide repeat proteins"/>
    <property type="match status" value="1"/>
</dbReference>
<dbReference type="Gene3D" id="3.30.60.70">
    <property type="entry name" value="Trimeric LpxA-like enzymes"/>
    <property type="match status" value="1"/>
</dbReference>
<dbReference type="HAMAP" id="MF_02122">
    <property type="entry name" value="DapD_type2"/>
    <property type="match status" value="1"/>
</dbReference>
<dbReference type="InterPro" id="IPR019876">
    <property type="entry name" value="DapD_gammaproteobac"/>
</dbReference>
<dbReference type="InterPro" id="IPR001451">
    <property type="entry name" value="Hexapep"/>
</dbReference>
<dbReference type="InterPro" id="IPR032784">
    <property type="entry name" value="THDPS_M"/>
</dbReference>
<dbReference type="InterPro" id="IPR038361">
    <property type="entry name" value="THDPS_M_sf"/>
</dbReference>
<dbReference type="InterPro" id="IPR011004">
    <property type="entry name" value="Trimer_LpxA-like_sf"/>
</dbReference>
<dbReference type="InterPro" id="IPR026586">
    <property type="entry name" value="Type2_DapD"/>
</dbReference>
<dbReference type="NCBIfam" id="TIGR03536">
    <property type="entry name" value="DapD_gpp"/>
    <property type="match status" value="1"/>
</dbReference>
<dbReference type="Pfam" id="PF14602">
    <property type="entry name" value="Hexapep_2"/>
    <property type="match status" value="1"/>
</dbReference>
<dbReference type="Pfam" id="PF14789">
    <property type="entry name" value="THDPS_M"/>
    <property type="match status" value="1"/>
</dbReference>
<dbReference type="SUPFAM" id="SSF51161">
    <property type="entry name" value="Trimeric LpxA-like enzymes"/>
    <property type="match status" value="1"/>
</dbReference>
<sequence length="344" mass="35858">MSNTLFSLAFGVGSQNRQGAWLEVFYAQPLLNPSAELVAAVAPVLGYEGGNQAIAFSNAQAAQLAEALKGVDAAQAALLTRLAESHKPLVATLLAEDAALSSTPEAYLKLHLLSHRLVKPHGVSLAGIFPLLPNVAWTNQGAVDLGELAELQLEARLKGELLEVFSVDKFPKMTDYVVPAGVRIADTARVRLGAYIGEGTTIMHEGFVNFNAGTEGPGMIEGRVSAGVFVGKGSDLGGGCSTMGTLSGGGNIVIKVGEGCLIGANAGIGIPLGDRNTVEAGLYITAGTKVNLLDENNELVKVVKARDLAGQTDLLFRRNSLNGAVECKTHKSAIELNEALHAHN</sequence>
<gene>
    <name evidence="1" type="primary">dapD</name>
    <name type="ordered locus">PP_1530</name>
</gene>
<evidence type="ECO:0000255" key="1">
    <source>
        <dbReference type="HAMAP-Rule" id="MF_02122"/>
    </source>
</evidence>
<reference key="1">
    <citation type="journal article" date="2002" name="Environ. Microbiol.">
        <title>Complete genome sequence and comparative analysis of the metabolically versatile Pseudomonas putida KT2440.</title>
        <authorList>
            <person name="Nelson K.E."/>
            <person name="Weinel C."/>
            <person name="Paulsen I.T."/>
            <person name="Dodson R.J."/>
            <person name="Hilbert H."/>
            <person name="Martins dos Santos V.A.P."/>
            <person name="Fouts D.E."/>
            <person name="Gill S.R."/>
            <person name="Pop M."/>
            <person name="Holmes M."/>
            <person name="Brinkac L.M."/>
            <person name="Beanan M.J."/>
            <person name="DeBoy R.T."/>
            <person name="Daugherty S.C."/>
            <person name="Kolonay J.F."/>
            <person name="Madupu R."/>
            <person name="Nelson W.C."/>
            <person name="White O."/>
            <person name="Peterson J.D."/>
            <person name="Khouri H.M."/>
            <person name="Hance I."/>
            <person name="Chris Lee P."/>
            <person name="Holtzapple E.K."/>
            <person name="Scanlan D."/>
            <person name="Tran K."/>
            <person name="Moazzez A."/>
            <person name="Utterback T.R."/>
            <person name="Rizzo M."/>
            <person name="Lee K."/>
            <person name="Kosack D."/>
            <person name="Moestl D."/>
            <person name="Wedler H."/>
            <person name="Lauber J."/>
            <person name="Stjepandic D."/>
            <person name="Hoheisel J."/>
            <person name="Straetz M."/>
            <person name="Heim S."/>
            <person name="Kiewitz C."/>
            <person name="Eisen J.A."/>
            <person name="Timmis K.N."/>
            <person name="Duesterhoeft A."/>
            <person name="Tuemmler B."/>
            <person name="Fraser C.M."/>
        </authorList>
    </citation>
    <scope>NUCLEOTIDE SEQUENCE [LARGE SCALE GENOMIC DNA]</scope>
    <source>
        <strain>ATCC 47054 / DSM 6125 / CFBP 8728 / NCIMB 11950 / KT2440</strain>
    </source>
</reference>
<keyword id="KW-0012">Acyltransferase</keyword>
<keyword id="KW-0028">Amino-acid biosynthesis</keyword>
<keyword id="KW-0963">Cytoplasm</keyword>
<keyword id="KW-0220">Diaminopimelate biosynthesis</keyword>
<keyword id="KW-0457">Lysine biosynthesis</keyword>
<keyword id="KW-0460">Magnesium</keyword>
<keyword id="KW-0479">Metal-binding</keyword>
<keyword id="KW-1185">Reference proteome</keyword>
<keyword id="KW-0808">Transferase</keyword>
<feature type="chain" id="PRO_0000412266" description="2,3,4,5-tetrahydropyridine-2,6-dicarboxylate N-succinyltransferase">
    <location>
        <begin position="1"/>
        <end position="344"/>
    </location>
</feature>
<feature type="active site" description="Acyl-anhydride intermediate" evidence="1">
    <location>
        <position position="221"/>
    </location>
</feature>
<feature type="binding site" evidence="1">
    <location>
        <position position="205"/>
    </location>
    <ligand>
        <name>Mg(2+)</name>
        <dbReference type="ChEBI" id="CHEBI:18420"/>
        <label>2</label>
        <note>ligand shared between trimeric partners</note>
    </ligand>
</feature>
<feature type="binding site" evidence="1">
    <location>
        <position position="223"/>
    </location>
    <ligand>
        <name>succinyl-CoA</name>
        <dbReference type="ChEBI" id="CHEBI:57292"/>
    </ligand>
</feature>
<feature type="binding site" evidence="1">
    <location>
        <position position="238"/>
    </location>
    <ligand>
        <name>succinyl-CoA</name>
        <dbReference type="ChEBI" id="CHEBI:57292"/>
    </ligand>
</feature>
<feature type="binding site" evidence="1">
    <location>
        <position position="241"/>
    </location>
    <ligand>
        <name>succinyl-CoA</name>
        <dbReference type="ChEBI" id="CHEBI:57292"/>
    </ligand>
</feature>
<feature type="binding site" evidence="1">
    <location>
        <position position="264"/>
    </location>
    <ligand>
        <name>succinyl-CoA</name>
        <dbReference type="ChEBI" id="CHEBI:57292"/>
    </ligand>
</feature>
<feature type="binding site" evidence="1">
    <location>
        <begin position="279"/>
        <end position="280"/>
    </location>
    <ligand>
        <name>succinyl-CoA</name>
        <dbReference type="ChEBI" id="CHEBI:57292"/>
    </ligand>
</feature>
<feature type="binding site" evidence="1">
    <location>
        <position position="287"/>
    </location>
    <ligand>
        <name>succinyl-CoA</name>
        <dbReference type="ChEBI" id="CHEBI:57292"/>
    </ligand>
</feature>
<feature type="binding site" evidence="1">
    <location>
        <position position="304"/>
    </location>
    <ligand>
        <name>succinyl-CoA</name>
        <dbReference type="ChEBI" id="CHEBI:57292"/>
    </ligand>
</feature>
<feature type="binding site" evidence="1">
    <location>
        <begin position="317"/>
        <end position="320"/>
    </location>
    <ligand>
        <name>succinyl-CoA</name>
        <dbReference type="ChEBI" id="CHEBI:57292"/>
    </ligand>
</feature>
<proteinExistence type="inferred from homology"/>
<protein>
    <recommendedName>
        <fullName evidence="1">2,3,4,5-tetrahydropyridine-2,6-dicarboxylate N-succinyltransferase</fullName>
        <ecNumber evidence="1">2.3.1.117</ecNumber>
    </recommendedName>
    <alternativeName>
        <fullName evidence="1">Tetrahydrodipicolinate N-succinyltransferase</fullName>
        <shortName evidence="1">THDP succinyltransferase</shortName>
        <shortName evidence="1">THP succinyltransferase</shortName>
    </alternativeName>
    <alternativeName>
        <fullName evidence="1">Tetrahydropicolinate succinylase</fullName>
    </alternativeName>
</protein>